<name>CBR2_MOUSE</name>
<sequence length="244" mass="25958">MKLNFSGLRALVTGAGKGIGRDTVKALHASGAKVVAVTRTNSDLVSLAKECPGIEPVCVDLGDWDATEKALGGIGPVDLLVNNAALVIMQPFLEVTKEAFDRSFSVNLRSVFQVSQMVARDMINRGVPGSIVNVSSMVAHVTFPNLITYSSTKGAMTMLTKAMAMELGPHKIRVNSVNPTVVLTDMGKKVSADPEFARKLKERHPLRKFAEVEDVVNSILFLLSDRSASTSGGGILVDAGYLAS</sequence>
<feature type="chain" id="PRO_0000054547" description="Carbonyl reductase [NADPH] 2">
    <location>
        <begin position="1"/>
        <end position="244"/>
    </location>
</feature>
<feature type="active site" description="Proton acceptor">
    <location>
        <position position="149"/>
    </location>
</feature>
<feature type="binding site" evidence="3">
    <location>
        <begin position="11"/>
        <end position="39"/>
    </location>
    <ligand>
        <name>NADP(+)</name>
        <dbReference type="ChEBI" id="CHEBI:58349"/>
    </ligand>
</feature>
<feature type="binding site">
    <location>
        <position position="136"/>
    </location>
    <ligand>
        <name>substrate</name>
    </ligand>
</feature>
<feature type="modified residue" description="Phosphoserine" evidence="6">
    <location>
        <position position="42"/>
    </location>
</feature>
<feature type="modified residue" description="Phosphoserine" evidence="6">
    <location>
        <position position="176"/>
    </location>
</feature>
<feature type="mutagenesis site" description="Converts the coenzyme specificity from NADP to NAD." evidence="4">
    <original>T</original>
    <variation>R</variation>
    <location>
        <position position="38"/>
    </location>
</feature>
<feature type="strand" evidence="7">
    <location>
        <begin position="9"/>
        <end position="14"/>
    </location>
</feature>
<feature type="helix" evidence="7">
    <location>
        <begin position="18"/>
        <end position="29"/>
    </location>
</feature>
<feature type="strand" evidence="7">
    <location>
        <begin position="33"/>
        <end position="39"/>
    </location>
</feature>
<feature type="helix" evidence="7">
    <location>
        <begin position="41"/>
        <end position="50"/>
    </location>
</feature>
<feature type="strand" evidence="7">
    <location>
        <begin position="55"/>
        <end position="58"/>
    </location>
</feature>
<feature type="helix" evidence="7">
    <location>
        <begin position="64"/>
        <end position="71"/>
    </location>
</feature>
<feature type="strand" evidence="7">
    <location>
        <begin position="78"/>
        <end position="82"/>
    </location>
</feature>
<feature type="helix" evidence="7">
    <location>
        <begin position="92"/>
        <end position="94"/>
    </location>
</feature>
<feature type="helix" evidence="7">
    <location>
        <begin position="97"/>
        <end position="107"/>
    </location>
</feature>
<feature type="helix" evidence="7">
    <location>
        <begin position="109"/>
        <end position="125"/>
    </location>
</feature>
<feature type="strand" evidence="7">
    <location>
        <begin position="129"/>
        <end position="134"/>
    </location>
</feature>
<feature type="helix" evidence="7">
    <location>
        <begin position="137"/>
        <end position="139"/>
    </location>
</feature>
<feature type="helix" evidence="7">
    <location>
        <begin position="147"/>
        <end position="167"/>
    </location>
</feature>
<feature type="helix" evidence="7">
    <location>
        <begin position="168"/>
        <end position="170"/>
    </location>
</feature>
<feature type="strand" evidence="7">
    <location>
        <begin position="172"/>
        <end position="179"/>
    </location>
</feature>
<feature type="helix" evidence="7">
    <location>
        <begin position="185"/>
        <end position="190"/>
    </location>
</feature>
<feature type="helix" evidence="7">
    <location>
        <begin position="194"/>
        <end position="203"/>
    </location>
</feature>
<feature type="helix" evidence="7">
    <location>
        <begin position="212"/>
        <end position="223"/>
    </location>
</feature>
<feature type="helix" evidence="7">
    <location>
        <begin position="225"/>
        <end position="227"/>
    </location>
</feature>
<feature type="strand" evidence="7">
    <location>
        <begin position="232"/>
        <end position="238"/>
    </location>
</feature>
<feature type="helix" evidence="7">
    <location>
        <begin position="241"/>
        <end position="243"/>
    </location>
</feature>
<keyword id="KW-0002">3D-structure</keyword>
<keyword id="KW-0903">Direct protein sequencing</keyword>
<keyword id="KW-0496">Mitochondrion</keyword>
<keyword id="KW-0520">NAD</keyword>
<keyword id="KW-0521">NADP</keyword>
<keyword id="KW-0560">Oxidoreductase</keyword>
<keyword id="KW-0597">Phosphoprotein</keyword>
<keyword id="KW-1185">Reference proteome</keyword>
<accession>P08074</accession>
<proteinExistence type="evidence at protein level"/>
<organism>
    <name type="scientific">Mus musculus</name>
    <name type="common">Mouse</name>
    <dbReference type="NCBI Taxonomy" id="10090"/>
    <lineage>
        <taxon>Eukaryota</taxon>
        <taxon>Metazoa</taxon>
        <taxon>Chordata</taxon>
        <taxon>Craniata</taxon>
        <taxon>Vertebrata</taxon>
        <taxon>Euteleostomi</taxon>
        <taxon>Mammalia</taxon>
        <taxon>Eutheria</taxon>
        <taxon>Euarchontoglires</taxon>
        <taxon>Glires</taxon>
        <taxon>Rodentia</taxon>
        <taxon>Myomorpha</taxon>
        <taxon>Muroidea</taxon>
        <taxon>Muridae</taxon>
        <taxon>Murinae</taxon>
        <taxon>Mus</taxon>
        <taxon>Mus</taxon>
    </lineage>
</organism>
<reference key="1">
    <citation type="journal article" date="1988" name="J. Cell Biol.">
        <title>A growth factor-repressible gene associated with protein kinase C-mediated inhibition of adipocyte differentiation.</title>
        <authorList>
            <person name="Navre M."/>
            <person name="Ringold G.M."/>
        </authorList>
    </citation>
    <scope>NUCLEOTIDE SEQUENCE [MRNA]</scope>
    <source>
        <strain>CH3</strain>
    </source>
</reference>
<reference key="2">
    <citation type="journal article" date="1995" name="Eur. J. Biochem.">
        <title>Cloning, expression and tissue distribution of mouse tetrameric carbonyl reductase. Identity with an adipocyte 27-kDa protein.</title>
        <authorList>
            <person name="Nakanishi M."/>
            <person name="Deyashiki Y."/>
            <person name="Ohshima K."/>
            <person name="Hara A."/>
        </authorList>
    </citation>
    <scope>NUCLEOTIDE SEQUENCE [MRNA]</scope>
    <scope>PARTIAL PROTEIN SEQUENCE</scope>
    <scope>FUNCTION</scope>
    <scope>CATALYTIC ACTIVITY</scope>
    <scope>TISSUE SPECIFICITY</scope>
</reference>
<reference key="3">
    <citation type="journal article" date="2004" name="Genome Res.">
        <title>The status, quality, and expansion of the NIH full-length cDNA project: the Mammalian Gene Collection (MGC).</title>
        <authorList>
            <consortium name="The MGC Project Team"/>
        </authorList>
    </citation>
    <scope>NUCLEOTIDE SEQUENCE [LARGE SCALE MRNA]</scope>
    <source>
        <strain>FVB/N</strain>
        <tissue>Colon</tissue>
    </source>
</reference>
<reference key="4">
    <citation type="journal article" date="1994" name="Histochem. J.">
        <title>Ultrastructural localization of carbonyl reductase in mouse lung.</title>
        <authorList>
            <person name="Matsuura K."/>
            <person name="Bunai Y."/>
            <person name="Ohya I."/>
            <person name="Hara A."/>
            <person name="Nakanishi M."/>
            <person name="Sawada H."/>
        </authorList>
    </citation>
    <scope>SUBCELLULAR LOCATION</scope>
</reference>
<reference key="5">
    <citation type="journal article" date="1997" name="J. Biol. Chem.">
        <title>Switch of coenzyme specificity of mouse lung carbonyl reductase by substitution of threonine 38 with aspartic acid.</title>
        <authorList>
            <person name="Nakanishi M."/>
            <person name="Matsuura K."/>
            <person name="Kaibe H."/>
            <person name="Tanaka N."/>
            <person name="Nonaka T."/>
            <person name="Mitsui Y."/>
            <person name="Hara A."/>
        </authorList>
    </citation>
    <scope>MUTAGENESIS OF THR-38</scope>
    <scope>COENZYME SPECIFICITY</scope>
</reference>
<reference key="6">
    <citation type="journal article" date="2010" name="Cell">
        <title>A tissue-specific atlas of mouse protein phosphorylation and expression.</title>
        <authorList>
            <person name="Huttlin E.L."/>
            <person name="Jedrychowski M.P."/>
            <person name="Elias J.E."/>
            <person name="Goswami T."/>
            <person name="Rad R."/>
            <person name="Beausoleil S.A."/>
            <person name="Villen J."/>
            <person name="Haas W."/>
            <person name="Sowa M.E."/>
            <person name="Gygi S.P."/>
        </authorList>
    </citation>
    <scope>PHOSPHORYLATION [LARGE SCALE ANALYSIS] AT SER-42 AND SER-176</scope>
    <scope>IDENTIFICATION BY MASS SPECTROMETRY [LARGE SCALE ANALYSIS]</scope>
    <source>
        <tissue>Brain</tissue>
        <tissue>Brown adipose tissue</tissue>
        <tissue>Heart</tissue>
        <tissue>Kidney</tissue>
        <tissue>Lung</tissue>
        <tissue>Pancreas</tissue>
        <tissue>Testis</tissue>
    </source>
</reference>
<reference key="7">
    <citation type="journal article" date="1996" name="Structure">
        <title>Crystal structure of the ternary complex of mouse lung carbonyl reductase at 1.8-A resolution: the structural origin of coenzyme specificity in the short-chain dehydrogenase/reductase family.</title>
        <authorList>
            <person name="Tanaka N."/>
            <person name="Nonaka T."/>
            <person name="Nakanishi M."/>
            <person name="Deyashiki Y."/>
            <person name="Hara A."/>
            <person name="Mitsui Y."/>
        </authorList>
    </citation>
    <scope>X-RAY CRYSTALLOGRAPHY (1.8 ANGSTROMS) IN COMPLEX WITH NADPH</scope>
</reference>
<evidence type="ECO:0000269" key="1">
    <source>
    </source>
</evidence>
<evidence type="ECO:0000269" key="2">
    <source>
    </source>
</evidence>
<evidence type="ECO:0000269" key="3">
    <source>
    </source>
</evidence>
<evidence type="ECO:0000269" key="4">
    <source>
    </source>
</evidence>
<evidence type="ECO:0000305" key="5"/>
<evidence type="ECO:0007744" key="6">
    <source>
    </source>
</evidence>
<evidence type="ECO:0007829" key="7">
    <source>
        <dbReference type="PDB" id="1CYD"/>
    </source>
</evidence>
<gene>
    <name type="primary">Cbr2</name>
</gene>
<dbReference type="EC" id="1.1.1.184" evidence="1"/>
<dbReference type="EMBL" id="D26123">
    <property type="protein sequence ID" value="BAA05120.1"/>
    <property type="molecule type" value="mRNA"/>
</dbReference>
<dbReference type="EMBL" id="X07411">
    <property type="protein sequence ID" value="CAA30309.1"/>
    <property type="molecule type" value="mRNA"/>
</dbReference>
<dbReference type="EMBL" id="BC010758">
    <property type="protein sequence ID" value="AAH10758.1"/>
    <property type="molecule type" value="mRNA"/>
</dbReference>
<dbReference type="CCDS" id="CCDS25756.1"/>
<dbReference type="PIR" id="S03382">
    <property type="entry name" value="A28053"/>
</dbReference>
<dbReference type="RefSeq" id="NP_031647.1">
    <property type="nucleotide sequence ID" value="NM_007621.3"/>
</dbReference>
<dbReference type="PDB" id="1CYD">
    <property type="method" value="X-ray"/>
    <property type="resolution" value="1.80 A"/>
    <property type="chains" value="A/B/C/D=1-244"/>
</dbReference>
<dbReference type="PDBsum" id="1CYD"/>
<dbReference type="SMR" id="P08074"/>
<dbReference type="FunCoup" id="P08074">
    <property type="interactions" value="503"/>
</dbReference>
<dbReference type="STRING" id="10090.ENSMUSP00000026148"/>
<dbReference type="GlyGen" id="P08074">
    <property type="glycosylation" value="1 site, 1 O-linked glycan (1 site)"/>
</dbReference>
<dbReference type="iPTMnet" id="P08074"/>
<dbReference type="PhosphoSitePlus" id="P08074"/>
<dbReference type="jPOST" id="P08074"/>
<dbReference type="PaxDb" id="10090-ENSMUSP00000026148"/>
<dbReference type="PeptideAtlas" id="P08074"/>
<dbReference type="ProteomicsDB" id="279931"/>
<dbReference type="Pumba" id="P08074"/>
<dbReference type="DNASU" id="12409"/>
<dbReference type="Ensembl" id="ENSMUST00000026148.9">
    <property type="protein sequence ID" value="ENSMUSP00000026148.3"/>
    <property type="gene ID" value="ENSMUSG00000025150.11"/>
</dbReference>
<dbReference type="GeneID" id="12409"/>
<dbReference type="KEGG" id="mmu:12409"/>
<dbReference type="UCSC" id="uc007muj.2">
    <property type="organism name" value="mouse"/>
</dbReference>
<dbReference type="AGR" id="MGI:107200"/>
<dbReference type="CTD" id="12409"/>
<dbReference type="MGI" id="MGI:107200">
    <property type="gene designation" value="Cbr2"/>
</dbReference>
<dbReference type="VEuPathDB" id="HostDB:ENSMUSG00000025150"/>
<dbReference type="eggNOG" id="KOG1207">
    <property type="taxonomic scope" value="Eukaryota"/>
</dbReference>
<dbReference type="GeneTree" id="ENSGT00940000154873"/>
<dbReference type="HOGENOM" id="CLU_010194_1_0_1"/>
<dbReference type="InParanoid" id="P08074"/>
<dbReference type="OMA" id="KGPYFLM"/>
<dbReference type="OrthoDB" id="1393670at2759"/>
<dbReference type="PhylomeDB" id="P08074"/>
<dbReference type="TreeFam" id="TF313841"/>
<dbReference type="SABIO-RK" id="P08074"/>
<dbReference type="BioGRID-ORCS" id="12409">
    <property type="hits" value="0 hits in 78 CRISPR screens"/>
</dbReference>
<dbReference type="ChiTaRS" id="Cbr2">
    <property type="organism name" value="mouse"/>
</dbReference>
<dbReference type="EvolutionaryTrace" id="P08074"/>
<dbReference type="PRO" id="PR:P08074"/>
<dbReference type="Proteomes" id="UP000000589">
    <property type="component" value="Chromosome 11"/>
</dbReference>
<dbReference type="RNAct" id="P08074">
    <property type="molecule type" value="protein"/>
</dbReference>
<dbReference type="Bgee" id="ENSMUSG00000025150">
    <property type="expression patterns" value="Expressed in right lung and 147 other cell types or tissues"/>
</dbReference>
<dbReference type="ExpressionAtlas" id="P08074">
    <property type="expression patterns" value="baseline and differential"/>
</dbReference>
<dbReference type="GO" id="GO:0005759">
    <property type="term" value="C:mitochondrial matrix"/>
    <property type="evidence" value="ECO:0007669"/>
    <property type="project" value="UniProtKB-SubCell"/>
</dbReference>
<dbReference type="GO" id="GO:0005739">
    <property type="term" value="C:mitochondrion"/>
    <property type="evidence" value="ECO:0007005"/>
    <property type="project" value="MGI"/>
</dbReference>
<dbReference type="GO" id="GO:0004090">
    <property type="term" value="F:carbonyl reductase (NADPH) activity"/>
    <property type="evidence" value="ECO:0000314"/>
    <property type="project" value="MGI"/>
</dbReference>
<dbReference type="GO" id="GO:0042802">
    <property type="term" value="F:identical protein binding"/>
    <property type="evidence" value="ECO:0000314"/>
    <property type="project" value="MGI"/>
</dbReference>
<dbReference type="GO" id="GO:0044281">
    <property type="term" value="P:small molecule metabolic process"/>
    <property type="evidence" value="ECO:0007669"/>
    <property type="project" value="UniProtKB-ARBA"/>
</dbReference>
<dbReference type="CDD" id="cd05351">
    <property type="entry name" value="XR_like_SDR_c"/>
    <property type="match status" value="1"/>
</dbReference>
<dbReference type="FunFam" id="3.40.50.720:FF:000214">
    <property type="entry name" value="L-xylulose reductase"/>
    <property type="match status" value="1"/>
</dbReference>
<dbReference type="Gene3D" id="3.40.50.720">
    <property type="entry name" value="NAD(P)-binding Rossmann-like Domain"/>
    <property type="match status" value="1"/>
</dbReference>
<dbReference type="InterPro" id="IPR051737">
    <property type="entry name" value="L-xylulose/Carbonyl_redctase"/>
</dbReference>
<dbReference type="InterPro" id="IPR036291">
    <property type="entry name" value="NAD(P)-bd_dom_sf"/>
</dbReference>
<dbReference type="InterPro" id="IPR020904">
    <property type="entry name" value="Sc_DH/Rdtase_CS"/>
</dbReference>
<dbReference type="InterPro" id="IPR002347">
    <property type="entry name" value="SDR_fam"/>
</dbReference>
<dbReference type="PANTHER" id="PTHR44252:SF1">
    <property type="entry name" value="CARBONYL REDUCTASE [NADPH] 2"/>
    <property type="match status" value="1"/>
</dbReference>
<dbReference type="PANTHER" id="PTHR44252">
    <property type="entry name" value="D-ERYTHRULOSE REDUCTASE"/>
    <property type="match status" value="1"/>
</dbReference>
<dbReference type="Pfam" id="PF00106">
    <property type="entry name" value="adh_short"/>
    <property type="match status" value="1"/>
</dbReference>
<dbReference type="PRINTS" id="PR00081">
    <property type="entry name" value="GDHRDH"/>
</dbReference>
<dbReference type="PRINTS" id="PR00080">
    <property type="entry name" value="SDRFAMILY"/>
</dbReference>
<dbReference type="SUPFAM" id="SSF51735">
    <property type="entry name" value="NAD(P)-binding Rossmann-fold domains"/>
    <property type="match status" value="1"/>
</dbReference>
<dbReference type="PROSITE" id="PS00061">
    <property type="entry name" value="ADH_SHORT"/>
    <property type="match status" value="1"/>
</dbReference>
<comment type="function">
    <text evidence="1">May function in the pulmonary metabolism of endogenous carbonyl compounds, such as aliphatic aldehydes and ketones derived from lipid peroxidation, 3-ketosteroids and fatty aldehydes, as well as in xenobiotic metabolism.</text>
</comment>
<comment type="catalytic activity">
    <reaction evidence="1">
        <text>a secondary alcohol + NADP(+) = a ketone + NADPH + H(+)</text>
        <dbReference type="Rhea" id="RHEA:19257"/>
        <dbReference type="ChEBI" id="CHEBI:15378"/>
        <dbReference type="ChEBI" id="CHEBI:17087"/>
        <dbReference type="ChEBI" id="CHEBI:35681"/>
        <dbReference type="ChEBI" id="CHEBI:57783"/>
        <dbReference type="ChEBI" id="CHEBI:58349"/>
        <dbReference type="EC" id="1.1.1.184"/>
    </reaction>
    <physiologicalReaction direction="right-to-left" evidence="1">
        <dbReference type="Rhea" id="RHEA:19259"/>
    </physiologicalReaction>
</comment>
<comment type="subunit">
    <text evidence="3">Homotetramer.</text>
</comment>
<comment type="subcellular location">
    <subcellularLocation>
        <location evidence="2">Mitochondrion matrix</location>
    </subcellularLocation>
</comment>
<comment type="tissue specificity">
    <text evidence="1 2">Predominantly expressed in lung, in ciliated cells, non-ciliated bronchiolar cells and type-II alveolar pneumocytes (PubMed:7705352, PubMed:8040004). Also detected in adipose tissue (at protein level) (PubMed:7705352). Low expression in testis, heart, kidney, spleen, brain and liver (PubMed:7705352).</text>
</comment>
<comment type="induction">
    <text>By glucocorticoids. Activated by fatty acids.</text>
</comment>
<comment type="miscellaneous">
    <text>Uses both NADP and NAD as substrates. Has a strong preference for NADP.</text>
</comment>
<comment type="similarity">
    <text evidence="5">Belongs to the short-chain dehydrogenases/reductases (SDR) family.</text>
</comment>
<protein>
    <recommendedName>
        <fullName>Carbonyl reductase [NADPH] 2</fullName>
        <ecNumber evidence="1">1.1.1.184</ecNumber>
    </recommendedName>
    <alternativeName>
        <fullName>Adipocyte protein P27</fullName>
        <shortName>AP27</shortName>
    </alternativeName>
    <alternativeName>
        <fullName>Lung carbonyl reductase</fullName>
        <shortName>LCR</shortName>
    </alternativeName>
    <alternativeName>
        <fullName>NADPH-dependent carbonyl reductase 2</fullName>
    </alternativeName>
</protein>